<reference key="1">
    <citation type="submission" date="2007-03" db="EMBL/GenBank/DDBJ databases">
        <authorList>
            <consortium name="NIH - Mammalian Gene Collection (MGC) project"/>
        </authorList>
    </citation>
    <scope>NUCLEOTIDE SEQUENCE [LARGE SCALE MRNA]</scope>
    <source>
        <strain>Hereford</strain>
        <tissue>Ascending colon</tissue>
    </source>
</reference>
<reference key="2">
    <citation type="journal article" date="1996" name="J. Biol. Chem.">
        <title>Further characterization of proteins associated with elastic fiber microfibrils including the molecular cloning of MAGP-2 (MP25).</title>
        <authorList>
            <person name="Gibson M.A."/>
            <person name="Hatzinikolas G."/>
            <person name="Kumaratilake J.S."/>
            <person name="Sandberg L.B."/>
            <person name="Nicholl J.K."/>
            <person name="Sutherland G.R."/>
            <person name="Cleary E.G."/>
        </authorList>
    </citation>
    <scope>PARTIAL PROTEIN SEQUENCE</scope>
</reference>
<feature type="signal peptide" evidence="2">
    <location>
        <begin position="1"/>
        <end position="23"/>
    </location>
</feature>
<feature type="chain" id="PRO_0000203524" description="Transforming growth factor-beta-induced protein ig-h3">
    <location>
        <begin position="24"/>
        <end position="683"/>
    </location>
</feature>
<feature type="domain" description="EMI" evidence="5">
    <location>
        <begin position="45"/>
        <end position="99"/>
    </location>
</feature>
<feature type="domain" description="FAS1 1" evidence="4">
    <location>
        <begin position="103"/>
        <end position="236"/>
    </location>
</feature>
<feature type="domain" description="FAS1 2" evidence="4">
    <location>
        <begin position="240"/>
        <end position="371"/>
    </location>
</feature>
<feature type="domain" description="FAS1 3" evidence="4">
    <location>
        <begin position="375"/>
        <end position="498"/>
    </location>
</feature>
<feature type="domain" description="FAS1 4" evidence="4">
    <location>
        <begin position="502"/>
        <end position="632"/>
    </location>
</feature>
<feature type="short sequence motif" description="Cell attachment site" evidence="3">
    <location>
        <begin position="642"/>
        <end position="644"/>
    </location>
</feature>
<feature type="modified residue" description="Phosphoserine" evidence="2">
    <location>
        <position position="37"/>
    </location>
</feature>
<feature type="modified residue" description="S-cysteinyl cysteine" evidence="2">
    <location>
        <position position="65"/>
    </location>
</feature>
<feature type="disulfide bond" evidence="2">
    <location>
        <begin position="49"/>
        <end position="85"/>
    </location>
</feature>
<feature type="disulfide bond" evidence="2">
    <location>
        <begin position="74"/>
        <end position="339"/>
    </location>
</feature>
<feature type="disulfide bond" evidence="2">
    <location>
        <begin position="84"/>
        <end position="97"/>
    </location>
</feature>
<feature type="disulfide bond" evidence="2">
    <location>
        <begin position="214"/>
        <end position="317"/>
    </location>
</feature>
<feature type="disulfide bond" evidence="2">
    <location>
        <begin position="473"/>
        <end position="478"/>
    </location>
</feature>
<sequence length="683" mass="74408">MALLGRLLPLALALALGPAATPAGPARSPYQLVLQHSRLRGRQHGPNVCAVQKLIGTNKKYFTNCKQWYQRKICGKSTVISYECCPGYEKVPGEKGCPAALPLSNLYETLGVVGATTTQLYTDRTEKLRPEMEGPGSFTIFAPSNEAWSSLPAEVLDSLVSNVNIELLNALRYHMVDRRVLTDELKHGMALTSMYQNSNIQIHHYPNGIVTVNCARLLKADHHATNGVVHLIDKVISTVTNNIQQIIEIEDTFETLRAAVAASGLNTLLEGDGQYTLLAPTNEAFEKIPAETLNRILGDPEALRDLLNNHILKSAMCAEAIVAGLSLETLEGTTLEVGCSGDMLTINGKPIISNKDVLATNGVIHFIDELLIPDSAKTLFELAADSDVSTAIDLFRQAGLSSHLSGNERLTLLAPMNSVFKDGTPPINARTKNLLLNHMIKDQLASKYLYHGQTLDTLGGRKLRVFVYRNSLCIENSCIAAHDKRGRYGTLFTMDRMLTPPMGTVMDVLKGDNRFSMLVAAIQSAGLTETLNREGVYTVFAPTNEAFQALPRGELNKLMGNAKELANILKYHVGDEILVSGGIGALVRLKSLQGDKLEVSSKNNVVSVNKEPVAEVDIMATNGVVHAISSVLQPPANRPQERGDELADSALEIFKQASAFSRATQSSVKLAPVYQRLLERMKH</sequence>
<proteinExistence type="evidence at protein level"/>
<gene>
    <name type="primary">TGFBI</name>
    <name type="synonym">BIGH3</name>
</gene>
<organism>
    <name type="scientific">Bos taurus</name>
    <name type="common">Bovine</name>
    <dbReference type="NCBI Taxonomy" id="9913"/>
    <lineage>
        <taxon>Eukaryota</taxon>
        <taxon>Metazoa</taxon>
        <taxon>Chordata</taxon>
        <taxon>Craniata</taxon>
        <taxon>Vertebrata</taxon>
        <taxon>Euteleostomi</taxon>
        <taxon>Mammalia</taxon>
        <taxon>Eutheria</taxon>
        <taxon>Laurasiatheria</taxon>
        <taxon>Artiodactyla</taxon>
        <taxon>Ruminantia</taxon>
        <taxon>Pecora</taxon>
        <taxon>Bovidae</taxon>
        <taxon>Bovinae</taxon>
        <taxon>Bos</taxon>
    </lineage>
</organism>
<keyword id="KW-0130">Cell adhesion</keyword>
<keyword id="KW-0903">Direct protein sequencing</keyword>
<keyword id="KW-1015">Disulfide bond</keyword>
<keyword id="KW-0272">Extracellular matrix</keyword>
<keyword id="KW-0301">Gamma-carboxyglutamic acid</keyword>
<keyword id="KW-0597">Phosphoprotein</keyword>
<keyword id="KW-1185">Reference proteome</keyword>
<keyword id="KW-0677">Repeat</keyword>
<keyword id="KW-0964">Secreted</keyword>
<keyword id="KW-0732">Signal</keyword>
<protein>
    <recommendedName>
        <fullName>Transforming growth factor-beta-induced protein ig-h3</fullName>
        <shortName>Beta ig-h3</shortName>
    </recommendedName>
    <alternativeName>
        <fullName>MP70</fullName>
    </alternativeName>
    <alternativeName>
        <fullName>MP78</fullName>
    </alternativeName>
</protein>
<evidence type="ECO:0000250" key="1">
    <source>
        <dbReference type="UniProtKB" id="O11780"/>
    </source>
</evidence>
<evidence type="ECO:0000250" key="2">
    <source>
        <dbReference type="UniProtKB" id="Q15582"/>
    </source>
</evidence>
<evidence type="ECO:0000255" key="3"/>
<evidence type="ECO:0000255" key="4">
    <source>
        <dbReference type="PROSITE-ProRule" id="PRU00082"/>
    </source>
</evidence>
<evidence type="ECO:0000255" key="5">
    <source>
        <dbReference type="PROSITE-ProRule" id="PRU00384"/>
    </source>
</evidence>
<comment type="function">
    <text evidence="1 2">Plays a role in cell adhesion (By similarity). May play a role in cell-collagen interactions (By similarity).</text>
</comment>
<comment type="subunit">
    <text evidence="1">Binds to type I, II, and IV collagens.</text>
</comment>
<comment type="subcellular location">
    <subcellularLocation>
        <location evidence="2">Secreted</location>
    </subcellularLocation>
    <subcellularLocation>
        <location evidence="2">Secreted</location>
        <location evidence="2">Extracellular space</location>
        <location evidence="2">Extracellular matrix</location>
    </subcellularLocation>
    <text evidence="2">May be associated both with microfibrils and with the cell surface.</text>
</comment>
<comment type="PTM">
    <text evidence="2">Gamma-carboxylation is controversial. Gamma-carboxyglutamated; gamma-carboxyglutamate residues are formed by vitamin K dependent carboxylation; this may be required for calcium binding. According to a more recent report, does not contain vitamin K-dependent gamma-carboxyglutamate residues.</text>
</comment>
<comment type="PTM">
    <text evidence="2">The EMI domain contains 2 expected intradomain disulfide bridges (Cys-49-Cys85 and Cys-84-Cys-97) and one unusual interdomain disulfide bridge to the second FAS1 domain (Cys-74-Cys-339). This arrangement violates the predicted disulfide bridge pattern of an EMI domain.</text>
</comment>
<accession>P55906</accession>
<accession>A7YWB6</accession>
<name>BGH3_BOVIN</name>
<dbReference type="EMBL" id="BC134483">
    <property type="protein sequence ID" value="AAI34484.1"/>
    <property type="molecule type" value="mRNA"/>
</dbReference>
<dbReference type="RefSeq" id="NP_001192331.1">
    <property type="nucleotide sequence ID" value="NM_001205402.1"/>
</dbReference>
<dbReference type="SMR" id="P55906"/>
<dbReference type="FunCoup" id="P55906">
    <property type="interactions" value="300"/>
</dbReference>
<dbReference type="STRING" id="9913.ENSBTAP00000072728"/>
<dbReference type="PaxDb" id="9913-ENSBTAP00000012519"/>
<dbReference type="GeneID" id="539596"/>
<dbReference type="KEGG" id="bta:539596"/>
<dbReference type="CTD" id="7045"/>
<dbReference type="VEuPathDB" id="HostDB:ENSBTAG00000009513"/>
<dbReference type="eggNOG" id="KOG1437">
    <property type="taxonomic scope" value="Eukaryota"/>
</dbReference>
<dbReference type="InParanoid" id="P55906"/>
<dbReference type="OMA" id="MYQNIDI"/>
<dbReference type="OrthoDB" id="286301at2759"/>
<dbReference type="Proteomes" id="UP000009136">
    <property type="component" value="Chromosome 7"/>
</dbReference>
<dbReference type="Bgee" id="ENSBTAG00000009513">
    <property type="expression patterns" value="Expressed in monocyte and 108 other cell types or tissues"/>
</dbReference>
<dbReference type="GO" id="GO:0031012">
    <property type="term" value="C:extracellular matrix"/>
    <property type="evidence" value="ECO:0000318"/>
    <property type="project" value="GO_Central"/>
</dbReference>
<dbReference type="GO" id="GO:0005615">
    <property type="term" value="C:extracellular space"/>
    <property type="evidence" value="ECO:0000318"/>
    <property type="project" value="GO_Central"/>
</dbReference>
<dbReference type="GO" id="GO:0050839">
    <property type="term" value="F:cell adhesion molecule binding"/>
    <property type="evidence" value="ECO:0000318"/>
    <property type="project" value="GO_Central"/>
</dbReference>
<dbReference type="GO" id="GO:0007155">
    <property type="term" value="P:cell adhesion"/>
    <property type="evidence" value="ECO:0000318"/>
    <property type="project" value="GO_Central"/>
</dbReference>
<dbReference type="GO" id="GO:0030198">
    <property type="term" value="P:extracellular matrix organization"/>
    <property type="evidence" value="ECO:0000318"/>
    <property type="project" value="GO_Central"/>
</dbReference>
<dbReference type="FunFam" id="2.30.180.10:FF:000001">
    <property type="entry name" value="periostin isoform X1"/>
    <property type="match status" value="1"/>
</dbReference>
<dbReference type="FunFam" id="2.30.180.10:FF:000002">
    <property type="entry name" value="periostin isoform X1"/>
    <property type="match status" value="1"/>
</dbReference>
<dbReference type="FunFam" id="2.30.180.10:FF:000003">
    <property type="entry name" value="periostin isoform X1"/>
    <property type="match status" value="1"/>
</dbReference>
<dbReference type="FunFam" id="2.30.180.10:FF:000007">
    <property type="entry name" value="Transforming growth factor-beta-induced protein ig-h3"/>
    <property type="match status" value="1"/>
</dbReference>
<dbReference type="Gene3D" id="2.30.180.10">
    <property type="entry name" value="FAS1 domain"/>
    <property type="match status" value="4"/>
</dbReference>
<dbReference type="InterPro" id="IPR050904">
    <property type="entry name" value="Adhesion/Biosynth-related"/>
</dbReference>
<dbReference type="InterPro" id="IPR011489">
    <property type="entry name" value="EMI_domain"/>
</dbReference>
<dbReference type="InterPro" id="IPR036378">
    <property type="entry name" value="FAS1_dom_sf"/>
</dbReference>
<dbReference type="InterPro" id="IPR000782">
    <property type="entry name" value="FAS1_domain"/>
</dbReference>
<dbReference type="InterPro" id="IPR016666">
    <property type="entry name" value="TGFBI/POSTN"/>
</dbReference>
<dbReference type="PANTHER" id="PTHR10900">
    <property type="entry name" value="PERIOSTIN-RELATED"/>
    <property type="match status" value="1"/>
</dbReference>
<dbReference type="PANTHER" id="PTHR10900:SF82">
    <property type="entry name" value="TRANSFORMING GROWTH FACTOR-BETA-INDUCED PROTEIN IG-H3"/>
    <property type="match status" value="1"/>
</dbReference>
<dbReference type="Pfam" id="PF02469">
    <property type="entry name" value="Fasciclin"/>
    <property type="match status" value="4"/>
</dbReference>
<dbReference type="PIRSF" id="PIRSF016553">
    <property type="entry name" value="BIGH3_OSF2"/>
    <property type="match status" value="1"/>
</dbReference>
<dbReference type="SMART" id="SM00554">
    <property type="entry name" value="FAS1"/>
    <property type="match status" value="4"/>
</dbReference>
<dbReference type="SUPFAM" id="SSF82153">
    <property type="entry name" value="FAS1 domain"/>
    <property type="match status" value="4"/>
</dbReference>
<dbReference type="PROSITE" id="PS51041">
    <property type="entry name" value="EMI"/>
    <property type="match status" value="1"/>
</dbReference>
<dbReference type="PROSITE" id="PS50213">
    <property type="entry name" value="FAS1"/>
    <property type="match status" value="4"/>
</dbReference>